<proteinExistence type="evidence at transcript level"/>
<feature type="chain" id="PRO_0000099164" description="DNA-directed RNA polymerase 7 kDa subunit">
    <location>
        <begin position="1"/>
        <end position="63"/>
    </location>
</feature>
<organismHost>
    <name type="scientific">Homo sapiens</name>
    <name type="common">Human</name>
    <dbReference type="NCBI Taxonomy" id="9606"/>
</organismHost>
<organismHost>
    <name type="scientific">Simiiformes</name>
    <dbReference type="NCBI Taxonomy" id="314293"/>
</organismHost>
<dbReference type="EC" id="2.7.7.6"/>
<dbReference type="EMBL" id="AJ293568">
    <property type="protein sequence ID" value="CAC21293.1"/>
    <property type="molecule type" value="Genomic_DNA"/>
</dbReference>
<dbReference type="RefSeq" id="NP_073440.1">
    <property type="nucleotide sequence ID" value="NC_002642.1"/>
</dbReference>
<dbReference type="SMR" id="Q9DHQ8"/>
<dbReference type="GeneID" id="918646"/>
<dbReference type="KEGG" id="vg:918646"/>
<dbReference type="OrthoDB" id="24500at10239"/>
<dbReference type="Proteomes" id="UP000136581">
    <property type="component" value="Genome"/>
</dbReference>
<dbReference type="GO" id="GO:0000428">
    <property type="term" value="C:DNA-directed RNA polymerase complex"/>
    <property type="evidence" value="ECO:0007669"/>
    <property type="project" value="UniProtKB-KW"/>
</dbReference>
<dbReference type="GO" id="GO:0044423">
    <property type="term" value="C:virion component"/>
    <property type="evidence" value="ECO:0007669"/>
    <property type="project" value="UniProtKB-KW"/>
</dbReference>
<dbReference type="GO" id="GO:0003677">
    <property type="term" value="F:DNA binding"/>
    <property type="evidence" value="ECO:0007669"/>
    <property type="project" value="InterPro"/>
</dbReference>
<dbReference type="GO" id="GO:0003899">
    <property type="term" value="F:DNA-directed RNA polymerase activity"/>
    <property type="evidence" value="ECO:0007669"/>
    <property type="project" value="UniProtKB-EC"/>
</dbReference>
<dbReference type="GO" id="GO:0006351">
    <property type="term" value="P:DNA-templated transcription"/>
    <property type="evidence" value="ECO:0007669"/>
    <property type="project" value="InterPro"/>
</dbReference>
<dbReference type="InterPro" id="IPR008448">
    <property type="entry name" value="RNA_pol_7kDa_chordopoxvir"/>
</dbReference>
<dbReference type="Pfam" id="PF05864">
    <property type="entry name" value="Chordopox_RPO7"/>
    <property type="match status" value="1"/>
</dbReference>
<keyword id="KW-0240">DNA-directed RNA polymerase</keyword>
<keyword id="KW-0244">Early protein</keyword>
<keyword id="KW-0548">Nucleotidyltransferase</keyword>
<keyword id="KW-0804">Transcription</keyword>
<keyword id="KW-0808">Transferase</keyword>
<keyword id="KW-0946">Virion</keyword>
<protein>
    <recommendedName>
        <fullName>DNA-directed RNA polymerase 7 kDa subunit</fullName>
        <ecNumber>2.7.7.6</ecNumber>
    </recommendedName>
</protein>
<reference key="1">
    <citation type="journal article" date="2001" name="Virology">
        <title>The genome sequence of Yaba-like disease virus, a yatapoxvirus.</title>
        <authorList>
            <person name="Lee H.-J."/>
            <person name="Essani K."/>
            <person name="Smith G.L."/>
        </authorList>
    </citation>
    <scope>NUCLEOTIDE SEQUENCE [LARGE SCALE GENOMIC DNA]</scope>
</reference>
<gene>
    <name type="primary">RPO7</name>
    <name type="ordered locus">55R</name>
</gene>
<name>RP07_YLDV</name>
<accession>Q9DHQ8</accession>
<organism>
    <name type="scientific">Yaba-like disease virus</name>
    <name type="common">YLDV</name>
    <dbReference type="NCBI Taxonomy" id="132475"/>
    <lineage>
        <taxon>Viruses</taxon>
        <taxon>Varidnaviria</taxon>
        <taxon>Bamfordvirae</taxon>
        <taxon>Nucleocytoviricota</taxon>
        <taxon>Pokkesviricetes</taxon>
        <taxon>Chitovirales</taxon>
        <taxon>Poxviridae</taxon>
        <taxon>Chordopoxvirinae</taxon>
        <taxon>Yatapoxvirus</taxon>
        <taxon>Tanapox virus</taxon>
    </lineage>
</organism>
<sequence>MVFQLICSTCGRDISEERYYLLIKELSLKKVLEGVKNNCCRLKLSTQIEPQRNLTVQPLIDIN</sequence>
<comment type="function">
    <text evidence="1">Part of the DNA-dependent RNA polymerase which catalyzes the transcription of viral DNA into RNA using the four ribonucleoside triphosphates as substrates. Responsible for the transcription of early, intermediate and late genes. DNA-dependent RNA polymerase associates with the early transcription factor (ETF) thereby allowing the early genes transcription. Late transcription, and probably also intermediate transcription, require newly synthesized RNA polymerase (By similarity).</text>
</comment>
<comment type="catalytic activity">
    <reaction>
        <text>RNA(n) + a ribonucleoside 5'-triphosphate = RNA(n+1) + diphosphate</text>
        <dbReference type="Rhea" id="RHEA:21248"/>
        <dbReference type="Rhea" id="RHEA-COMP:14527"/>
        <dbReference type="Rhea" id="RHEA-COMP:17342"/>
        <dbReference type="ChEBI" id="CHEBI:33019"/>
        <dbReference type="ChEBI" id="CHEBI:61557"/>
        <dbReference type="ChEBI" id="CHEBI:140395"/>
        <dbReference type="EC" id="2.7.7.6"/>
    </reaction>
</comment>
<comment type="subunit">
    <text evidence="1">The DNA-dependent RNA polymerase used for intermediate and late genes expression consists of eight subunits 147 kDa, 133 kDa, 35 kDa, 30 kDa, 22 kDa, 19 kDa, 18 kDa and 7 kDa totalling more than 500 kDa in mass. The same holoenzyme, with the addition of the transcription-specificity factor RAP94, is used for early gene expression (By similarity).</text>
</comment>
<comment type="subcellular location">
    <subcellularLocation>
        <location evidence="2">Virion</location>
    </subcellularLocation>
    <text evidence="1">All the enzymes and other proteins required to synthesize early mRNAs are packaged within the virion core along with the DNA genome. This is necessary because viral early mRNAs are synthesized within minutes after virus entry into the cell and are extruded through pores in the core particle (By similarity).</text>
</comment>
<comment type="induction">
    <text>Expressed in the early phase of the viral replicative cycle.</text>
</comment>
<comment type="similarity">
    <text evidence="2">Belongs to the poxviridae DNA-directed RNA polymerase 7 kDa subunit family.</text>
</comment>
<evidence type="ECO:0000250" key="1"/>
<evidence type="ECO:0000305" key="2"/>